<reference key="1">
    <citation type="journal article" date="2005" name="Nature">
        <title>Genomic sequence of the pathogenic and allergenic filamentous fungus Aspergillus fumigatus.</title>
        <authorList>
            <person name="Nierman W.C."/>
            <person name="Pain A."/>
            <person name="Anderson M.J."/>
            <person name="Wortman J.R."/>
            <person name="Kim H.S."/>
            <person name="Arroyo J."/>
            <person name="Berriman M."/>
            <person name="Abe K."/>
            <person name="Archer D.B."/>
            <person name="Bermejo C."/>
            <person name="Bennett J.W."/>
            <person name="Bowyer P."/>
            <person name="Chen D."/>
            <person name="Collins M."/>
            <person name="Coulsen R."/>
            <person name="Davies R."/>
            <person name="Dyer P.S."/>
            <person name="Farman M.L."/>
            <person name="Fedorova N."/>
            <person name="Fedorova N.D."/>
            <person name="Feldblyum T.V."/>
            <person name="Fischer R."/>
            <person name="Fosker N."/>
            <person name="Fraser A."/>
            <person name="Garcia J.L."/>
            <person name="Garcia M.J."/>
            <person name="Goble A."/>
            <person name="Goldman G.H."/>
            <person name="Gomi K."/>
            <person name="Griffith-Jones S."/>
            <person name="Gwilliam R."/>
            <person name="Haas B.J."/>
            <person name="Haas H."/>
            <person name="Harris D.E."/>
            <person name="Horiuchi H."/>
            <person name="Huang J."/>
            <person name="Humphray S."/>
            <person name="Jimenez J."/>
            <person name="Keller N."/>
            <person name="Khouri H."/>
            <person name="Kitamoto K."/>
            <person name="Kobayashi T."/>
            <person name="Konzack S."/>
            <person name="Kulkarni R."/>
            <person name="Kumagai T."/>
            <person name="Lafton A."/>
            <person name="Latge J.-P."/>
            <person name="Li W."/>
            <person name="Lord A."/>
            <person name="Lu C."/>
            <person name="Majoros W.H."/>
            <person name="May G.S."/>
            <person name="Miller B.L."/>
            <person name="Mohamoud Y."/>
            <person name="Molina M."/>
            <person name="Monod M."/>
            <person name="Mouyna I."/>
            <person name="Mulligan S."/>
            <person name="Murphy L.D."/>
            <person name="O'Neil S."/>
            <person name="Paulsen I."/>
            <person name="Penalva M.A."/>
            <person name="Pertea M."/>
            <person name="Price C."/>
            <person name="Pritchard B.L."/>
            <person name="Quail M.A."/>
            <person name="Rabbinowitsch E."/>
            <person name="Rawlins N."/>
            <person name="Rajandream M.A."/>
            <person name="Reichard U."/>
            <person name="Renauld H."/>
            <person name="Robson G.D."/>
            <person name="Rodriguez de Cordoba S."/>
            <person name="Rodriguez-Pena J.M."/>
            <person name="Ronning C.M."/>
            <person name="Rutter S."/>
            <person name="Salzberg S.L."/>
            <person name="Sanchez M."/>
            <person name="Sanchez-Ferrero J.C."/>
            <person name="Saunders D."/>
            <person name="Seeger K."/>
            <person name="Squares R."/>
            <person name="Squares S."/>
            <person name="Takeuchi M."/>
            <person name="Tekaia F."/>
            <person name="Turner G."/>
            <person name="Vazquez de Aldana C.R."/>
            <person name="Weidman J."/>
            <person name="White O."/>
            <person name="Woodward J.R."/>
            <person name="Yu J.-H."/>
            <person name="Fraser C.M."/>
            <person name="Galagan J.E."/>
            <person name="Asai K."/>
            <person name="Machida M."/>
            <person name="Hall N."/>
            <person name="Barrell B.G."/>
            <person name="Denning D.W."/>
        </authorList>
    </citation>
    <scope>NUCLEOTIDE SEQUENCE [LARGE SCALE GENOMIC DNA]</scope>
    <source>
        <strain>ATCC MYA-4609 / CBS 101355 / FGSC A1100 / Af293</strain>
    </source>
</reference>
<dbReference type="EC" id="2.3.1.35" evidence="1"/>
<dbReference type="EC" id="2.3.1.1" evidence="1"/>
<dbReference type="EMBL" id="AAHF01000003">
    <property type="protein sequence ID" value="EAL91786.1"/>
    <property type="molecule type" value="Genomic_DNA"/>
</dbReference>
<dbReference type="RefSeq" id="XP_753824.1">
    <property type="nucleotide sequence ID" value="XM_748731.1"/>
</dbReference>
<dbReference type="SMR" id="Q4WUE0"/>
<dbReference type="FunCoup" id="Q4WUE0">
    <property type="interactions" value="289"/>
</dbReference>
<dbReference type="STRING" id="330879.Q4WUE0"/>
<dbReference type="MEROPS" id="T05.001"/>
<dbReference type="EnsemblFungi" id="EAL91786">
    <property type="protein sequence ID" value="EAL91786"/>
    <property type="gene ID" value="AFUA_5G08120"/>
</dbReference>
<dbReference type="GeneID" id="3511116"/>
<dbReference type="KEGG" id="afm:AFUA_5G08120"/>
<dbReference type="VEuPathDB" id="FungiDB:Afu5g08120"/>
<dbReference type="eggNOG" id="KOG2786">
    <property type="taxonomic scope" value="Eukaryota"/>
</dbReference>
<dbReference type="HOGENOM" id="CLU_027172_1_0_1"/>
<dbReference type="InParanoid" id="Q4WUE0"/>
<dbReference type="OMA" id="WGRIVMA"/>
<dbReference type="OrthoDB" id="2017946at2759"/>
<dbReference type="UniPathway" id="UPA00068">
    <property type="reaction ID" value="UER00106"/>
</dbReference>
<dbReference type="UniPathway" id="UPA00068">
    <property type="reaction ID" value="UER00111"/>
</dbReference>
<dbReference type="PHI-base" id="PHI:10405"/>
<dbReference type="Proteomes" id="UP000002530">
    <property type="component" value="Chromosome 5"/>
</dbReference>
<dbReference type="GO" id="GO:0005759">
    <property type="term" value="C:mitochondrial matrix"/>
    <property type="evidence" value="ECO:0000318"/>
    <property type="project" value="GO_Central"/>
</dbReference>
<dbReference type="GO" id="GO:0004358">
    <property type="term" value="F:glutamate N-acetyltransferase activity"/>
    <property type="evidence" value="ECO:0007669"/>
    <property type="project" value="UniProtKB-UniRule"/>
</dbReference>
<dbReference type="GO" id="GO:0004042">
    <property type="term" value="F:L-glutamate N-acetyltransferase activity"/>
    <property type="evidence" value="ECO:0000318"/>
    <property type="project" value="GO_Central"/>
</dbReference>
<dbReference type="GO" id="GO:0006526">
    <property type="term" value="P:L-arginine biosynthetic process"/>
    <property type="evidence" value="ECO:0007669"/>
    <property type="project" value="UniProtKB-UniRule"/>
</dbReference>
<dbReference type="GO" id="GO:0006592">
    <property type="term" value="P:ornithine biosynthetic process"/>
    <property type="evidence" value="ECO:0000318"/>
    <property type="project" value="GO_Central"/>
</dbReference>
<dbReference type="CDD" id="cd02152">
    <property type="entry name" value="OAT"/>
    <property type="match status" value="1"/>
</dbReference>
<dbReference type="FunFam" id="3.10.20.340:FF:000002">
    <property type="entry name" value="Arginine biosynthesis bifunctional protein ArgJ, mitochondrial"/>
    <property type="match status" value="1"/>
</dbReference>
<dbReference type="FunFam" id="3.30.2330.10:FF:000001">
    <property type="entry name" value="Arginine biosynthesis bifunctional protein ArgJ, mitochondrial"/>
    <property type="match status" value="1"/>
</dbReference>
<dbReference type="FunFam" id="3.60.70.12:FF:000002">
    <property type="entry name" value="Arginine biosynthesis bifunctional protein ArgJ, mitochondrial"/>
    <property type="match status" value="1"/>
</dbReference>
<dbReference type="Gene3D" id="3.30.2330.10">
    <property type="entry name" value="arginine biosynthesis bifunctional protein suprefamily"/>
    <property type="match status" value="1"/>
</dbReference>
<dbReference type="Gene3D" id="3.10.20.340">
    <property type="entry name" value="ArgJ beta chain, C-terminal domain"/>
    <property type="match status" value="1"/>
</dbReference>
<dbReference type="Gene3D" id="3.60.70.12">
    <property type="entry name" value="L-amino peptidase D-ALA esterase/amidase"/>
    <property type="match status" value="1"/>
</dbReference>
<dbReference type="HAMAP" id="MF_01106">
    <property type="entry name" value="ArgJ"/>
    <property type="match status" value="1"/>
</dbReference>
<dbReference type="InterPro" id="IPR002813">
    <property type="entry name" value="Arg_biosynth_ArgJ"/>
</dbReference>
<dbReference type="InterPro" id="IPR016117">
    <property type="entry name" value="ArgJ-like_dom_sf"/>
</dbReference>
<dbReference type="InterPro" id="IPR042195">
    <property type="entry name" value="ArgJ_beta_C"/>
</dbReference>
<dbReference type="NCBIfam" id="TIGR00120">
    <property type="entry name" value="ArgJ"/>
    <property type="match status" value="1"/>
</dbReference>
<dbReference type="NCBIfam" id="NF003802">
    <property type="entry name" value="PRK05388.1"/>
    <property type="match status" value="1"/>
</dbReference>
<dbReference type="PANTHER" id="PTHR23100">
    <property type="entry name" value="ARGININE BIOSYNTHESIS BIFUNCTIONAL PROTEIN ARGJ"/>
    <property type="match status" value="1"/>
</dbReference>
<dbReference type="PANTHER" id="PTHR23100:SF0">
    <property type="entry name" value="ARGININE BIOSYNTHESIS BIFUNCTIONAL PROTEIN ARGJ, MITOCHONDRIAL"/>
    <property type="match status" value="1"/>
</dbReference>
<dbReference type="Pfam" id="PF01960">
    <property type="entry name" value="ArgJ"/>
    <property type="match status" value="1"/>
</dbReference>
<dbReference type="SUPFAM" id="SSF56266">
    <property type="entry name" value="DmpA/ArgJ-like"/>
    <property type="match status" value="1"/>
</dbReference>
<protein>
    <recommendedName>
        <fullName evidence="1">Arginine biosynthesis bifunctional protein ArgJ, mitochondrial</fullName>
    </recommendedName>
    <domain>
        <recommendedName>
            <fullName evidence="1">Glutamate N-acetyltransferase</fullName>
            <shortName evidence="1">GAT</shortName>
            <ecNumber evidence="1">2.3.1.35</ecNumber>
        </recommendedName>
        <alternativeName>
            <fullName evidence="1">Ornithine acetyltransferase</fullName>
            <shortName evidence="1">OATase</shortName>
        </alternativeName>
        <alternativeName>
            <fullName evidence="1">Ornithine transacetylase</fullName>
        </alternativeName>
    </domain>
    <domain>
        <recommendedName>
            <fullName evidence="1">Amino-acid acetyltransferase</fullName>
            <ecNumber evidence="1">2.3.1.1</ecNumber>
        </recommendedName>
        <alternativeName>
            <fullName evidence="1">N-acetylglutamate synthase</fullName>
            <shortName evidence="1">AGS</shortName>
        </alternativeName>
    </domain>
    <component>
        <recommendedName>
            <fullName evidence="1">Arginine biosynthesis bifunctional protein ArgJ alpha chain</fullName>
        </recommendedName>
    </component>
    <component>
        <recommendedName>
            <fullName evidence="1">Arginine biosynthesis bifunctional protein ArgJ beta chain</fullName>
        </recommendedName>
    </component>
</protein>
<gene>
    <name type="ORF">AFUA_5G08120</name>
</gene>
<comment type="function">
    <text evidence="1">Catalyzes two activities which are involved in the cyclic version of arginine biosynthesis: the synthesis of acetylglutamate from glutamate and acetyl-CoA, and of ornithine by transacetylation between acetylornithine and glutamate.</text>
</comment>
<comment type="catalytic activity">
    <reaction evidence="1">
        <text>N(2)-acetyl-L-ornithine + L-glutamate = N-acetyl-L-glutamate + L-ornithine</text>
        <dbReference type="Rhea" id="RHEA:15349"/>
        <dbReference type="ChEBI" id="CHEBI:29985"/>
        <dbReference type="ChEBI" id="CHEBI:44337"/>
        <dbReference type="ChEBI" id="CHEBI:46911"/>
        <dbReference type="ChEBI" id="CHEBI:57805"/>
        <dbReference type="EC" id="2.3.1.35"/>
    </reaction>
</comment>
<comment type="catalytic activity">
    <reaction evidence="1">
        <text>L-glutamate + acetyl-CoA = N-acetyl-L-glutamate + CoA + H(+)</text>
        <dbReference type="Rhea" id="RHEA:24292"/>
        <dbReference type="ChEBI" id="CHEBI:15378"/>
        <dbReference type="ChEBI" id="CHEBI:29985"/>
        <dbReference type="ChEBI" id="CHEBI:44337"/>
        <dbReference type="ChEBI" id="CHEBI:57287"/>
        <dbReference type="ChEBI" id="CHEBI:57288"/>
        <dbReference type="EC" id="2.3.1.1"/>
    </reaction>
</comment>
<comment type="pathway">
    <text evidence="1">Amino-acid biosynthesis; L-arginine biosynthesis; L-ornithine and N-acetyl-L-glutamate from L-glutamate and N(2)-acetyl-L-ornithine (cyclic): step 1/1.</text>
</comment>
<comment type="pathway">
    <text evidence="1">Amino-acid biosynthesis; L-arginine biosynthesis; N(2)-acetyl-L-ornithine from L-glutamate: step 1/4.</text>
</comment>
<comment type="subunit">
    <text evidence="1">Heterodimer of an alpha and a beta chain.</text>
</comment>
<comment type="subcellular location">
    <subcellularLocation>
        <location evidence="1">Mitochondrion matrix</location>
    </subcellularLocation>
</comment>
<comment type="PTM">
    <text evidence="1">The alpha and beta chains are autoproteolytically processed from a single precursor protein within the mitochondrion.</text>
</comment>
<comment type="miscellaneous">
    <text evidence="1">This protein may be expected to contain an N-terminal transit peptide but none has been predicted.</text>
</comment>
<comment type="similarity">
    <text evidence="1">Belongs to the ArgJ family.</text>
</comment>
<evidence type="ECO:0000255" key="1">
    <source>
        <dbReference type="HAMAP-Rule" id="MF_03124"/>
    </source>
</evidence>
<organism>
    <name type="scientific">Aspergillus fumigatus (strain ATCC MYA-4609 / CBS 101355 / FGSC A1100 / Af293)</name>
    <name type="common">Neosartorya fumigata</name>
    <dbReference type="NCBI Taxonomy" id="330879"/>
    <lineage>
        <taxon>Eukaryota</taxon>
        <taxon>Fungi</taxon>
        <taxon>Dikarya</taxon>
        <taxon>Ascomycota</taxon>
        <taxon>Pezizomycotina</taxon>
        <taxon>Eurotiomycetes</taxon>
        <taxon>Eurotiomycetidae</taxon>
        <taxon>Eurotiales</taxon>
        <taxon>Aspergillaceae</taxon>
        <taxon>Aspergillus</taxon>
        <taxon>Aspergillus subgen. Fumigati</taxon>
    </lineage>
</organism>
<proteinExistence type="inferred from homology"/>
<accession>Q4WUE0</accession>
<sequence length="466" mass="48923">MVSPAQPAAAMAAFARMAKGQVRNYSAPLDMAIPASKQKYIPSSGSYPKGFLVSGTHVGVKASNTKFPDLALISSETPCSAAAVFTTNKFQAAPVQVSKKTLESRQGQGIRSVVINSGCANAVTGKGGLEDAVNMGKKVDECNGLSEPSTIVMSTGVIGQRLPISKILNKIPTAHENLASTHDAWLTTARAICTTDTFPKLLSRTFALPSSPGRTYSLAGMTKGAGMIHPNMATLLGVLCTDAPIDPSALQSLLTHAVSRSFNSISVDGDTSTNDTVAILANGAAGGAPISSPASDDYTAMQEILTSFAQSLSQLVVRDGEGATKFVTVRVQNSPDYESARLIASTIARSPLVKTALYGRDANWGRILCAIGYTQGVAPGTVVPERTSVSFKPVDGSPVLKLLVNGEPEQVDEERASVILQEEDLEIVVDLGGGEKGEQGLGGEEAVYWFCDFSHEYVTINGDYRT</sequence>
<keyword id="KW-0012">Acyltransferase</keyword>
<keyword id="KW-0028">Amino-acid biosynthesis</keyword>
<keyword id="KW-0055">Arginine biosynthesis</keyword>
<keyword id="KW-0068">Autocatalytic cleavage</keyword>
<keyword id="KW-0496">Mitochondrion</keyword>
<keyword id="KW-0511">Multifunctional enzyme</keyword>
<keyword id="KW-1185">Reference proteome</keyword>
<keyword id="KW-0808">Transferase</keyword>
<name>ARGJ_ASPFU</name>
<feature type="chain" id="PRO_0000398016" description="Arginine biosynthesis bifunctional protein ArgJ alpha chain" evidence="1">
    <location>
        <begin position="1"/>
        <end position="233"/>
    </location>
</feature>
<feature type="chain" id="PRO_0000398017" description="Arginine biosynthesis bifunctional protein ArgJ beta chain" evidence="1">
    <location>
        <begin position="234"/>
        <end position="466"/>
    </location>
</feature>
<feature type="active site" description="Nucleophile" evidence="1">
    <location>
        <position position="234"/>
    </location>
</feature>
<feature type="binding site" evidence="1">
    <location>
        <position position="194"/>
    </location>
    <ligand>
        <name>substrate</name>
    </ligand>
</feature>
<feature type="binding site" evidence="1">
    <location>
        <position position="223"/>
    </location>
    <ligand>
        <name>substrate</name>
    </ligand>
</feature>
<feature type="binding site" evidence="1">
    <location>
        <position position="234"/>
    </location>
    <ligand>
        <name>substrate</name>
    </ligand>
</feature>
<feature type="binding site" evidence="1">
    <location>
        <position position="321"/>
    </location>
    <ligand>
        <name>substrate</name>
    </ligand>
</feature>
<feature type="binding site" evidence="1">
    <location>
        <position position="461"/>
    </location>
    <ligand>
        <name>substrate</name>
    </ligand>
</feature>
<feature type="binding site" evidence="1">
    <location>
        <position position="466"/>
    </location>
    <ligand>
        <name>substrate</name>
    </ligand>
</feature>
<feature type="site" description="Involved in the stabilization of negative charge on the oxyanion by the formation of the oxyanion hole" evidence="1">
    <location>
        <position position="155"/>
    </location>
</feature>
<feature type="site" description="Involved in the stabilization of negative charge on the oxyanion by the formation of the oxyanion hole" evidence="1">
    <location>
        <position position="156"/>
    </location>
</feature>
<feature type="site" description="Cleavage; by autolysis" evidence="1">
    <location>
        <begin position="233"/>
        <end position="234"/>
    </location>
</feature>